<dbReference type="EC" id="3.1.11.6" evidence="1"/>
<dbReference type="EMBL" id="CP000736">
    <property type="protein sequence ID" value="ABR52463.1"/>
    <property type="molecule type" value="Genomic_DNA"/>
</dbReference>
<dbReference type="SMR" id="A6U1Z5"/>
<dbReference type="KEGG" id="sah:SaurJH1_1615"/>
<dbReference type="HOGENOM" id="CLU_023625_3_1_9"/>
<dbReference type="GO" id="GO:0005737">
    <property type="term" value="C:cytoplasm"/>
    <property type="evidence" value="ECO:0007669"/>
    <property type="project" value="UniProtKB-SubCell"/>
</dbReference>
<dbReference type="GO" id="GO:0009318">
    <property type="term" value="C:exodeoxyribonuclease VII complex"/>
    <property type="evidence" value="ECO:0007669"/>
    <property type="project" value="InterPro"/>
</dbReference>
<dbReference type="GO" id="GO:0008855">
    <property type="term" value="F:exodeoxyribonuclease VII activity"/>
    <property type="evidence" value="ECO:0007669"/>
    <property type="project" value="UniProtKB-UniRule"/>
</dbReference>
<dbReference type="GO" id="GO:0003676">
    <property type="term" value="F:nucleic acid binding"/>
    <property type="evidence" value="ECO:0007669"/>
    <property type="project" value="InterPro"/>
</dbReference>
<dbReference type="GO" id="GO:0006308">
    <property type="term" value="P:DNA catabolic process"/>
    <property type="evidence" value="ECO:0007669"/>
    <property type="project" value="UniProtKB-UniRule"/>
</dbReference>
<dbReference type="CDD" id="cd04489">
    <property type="entry name" value="ExoVII_LU_OBF"/>
    <property type="match status" value="1"/>
</dbReference>
<dbReference type="HAMAP" id="MF_00378">
    <property type="entry name" value="Exonuc_7_L"/>
    <property type="match status" value="1"/>
</dbReference>
<dbReference type="InterPro" id="IPR003753">
    <property type="entry name" value="Exonuc_VII_L"/>
</dbReference>
<dbReference type="InterPro" id="IPR020579">
    <property type="entry name" value="Exonuc_VII_lsu_C"/>
</dbReference>
<dbReference type="InterPro" id="IPR025824">
    <property type="entry name" value="OB-fold_nuc-bd_dom"/>
</dbReference>
<dbReference type="NCBIfam" id="TIGR00237">
    <property type="entry name" value="xseA"/>
    <property type="match status" value="1"/>
</dbReference>
<dbReference type="PANTHER" id="PTHR30008">
    <property type="entry name" value="EXODEOXYRIBONUCLEASE 7 LARGE SUBUNIT"/>
    <property type="match status" value="1"/>
</dbReference>
<dbReference type="PANTHER" id="PTHR30008:SF0">
    <property type="entry name" value="EXODEOXYRIBONUCLEASE 7 LARGE SUBUNIT"/>
    <property type="match status" value="1"/>
</dbReference>
<dbReference type="Pfam" id="PF02601">
    <property type="entry name" value="Exonuc_VII_L"/>
    <property type="match status" value="1"/>
</dbReference>
<dbReference type="Pfam" id="PF13742">
    <property type="entry name" value="tRNA_anti_2"/>
    <property type="match status" value="1"/>
</dbReference>
<accession>A6U1Z5</accession>
<protein>
    <recommendedName>
        <fullName evidence="1">Exodeoxyribonuclease 7 large subunit</fullName>
        <ecNumber evidence="1">3.1.11.6</ecNumber>
    </recommendedName>
    <alternativeName>
        <fullName evidence="1">Exodeoxyribonuclease VII large subunit</fullName>
        <shortName evidence="1">Exonuclease VII large subunit</shortName>
    </alternativeName>
</protein>
<feature type="chain" id="PRO_1000079995" description="Exodeoxyribonuclease 7 large subunit">
    <location>
        <begin position="1"/>
        <end position="445"/>
    </location>
</feature>
<sequence>MSDYLSVSALTKYIKYKFDQDPHLQSVLIKGELSNFKKHSSGHLYFNVKDKESVISAMMFKGSASKLNFEPKEGDEVLLEARVSVFERRGNYQIYVNKMQLDGIGNLYQKLEALKKKLTEEGCFDKANKKSIPKFPKKIAVLTASTGAAIRDIHSTINSRFPLAEQIQISTLVQGEKAKDDIIEKIEYADSLGVDTIIVGRGGGSIEDLWNFNEEAVVRAIYNCKTPIISAVGHETDFTLSDFAADIRAATPTQAAVIATPDQYELLQQIQQYQFTLTRFIKKHLEQQRKHVEHLSSYYKFKKPTLLYDQQIQRRDDLEKRLKQQIQATFEQQRHRLMLLQQRYNLKALLSSVNQEQQNNLQLTNQLVKLLNSKILSYKNDLKNKVENLNNLSPTNTMLRGYAIVNKKDEVITSTKDLTENDQLTLTMKDGLVDAKVTKVRCNND</sequence>
<gene>
    <name evidence="1" type="primary">xseA</name>
    <name type="ordered locus">SaurJH1_1615</name>
</gene>
<evidence type="ECO:0000255" key="1">
    <source>
        <dbReference type="HAMAP-Rule" id="MF_00378"/>
    </source>
</evidence>
<organism>
    <name type="scientific">Staphylococcus aureus (strain JH1)</name>
    <dbReference type="NCBI Taxonomy" id="359787"/>
    <lineage>
        <taxon>Bacteria</taxon>
        <taxon>Bacillati</taxon>
        <taxon>Bacillota</taxon>
        <taxon>Bacilli</taxon>
        <taxon>Bacillales</taxon>
        <taxon>Staphylococcaceae</taxon>
        <taxon>Staphylococcus</taxon>
    </lineage>
</organism>
<reference key="1">
    <citation type="submission" date="2007-06" db="EMBL/GenBank/DDBJ databases">
        <title>Complete sequence of chromosome of Staphylococcus aureus subsp. aureus JH1.</title>
        <authorList>
            <consortium name="US DOE Joint Genome Institute"/>
            <person name="Copeland A."/>
            <person name="Lucas S."/>
            <person name="Lapidus A."/>
            <person name="Barry K."/>
            <person name="Detter J.C."/>
            <person name="Glavina del Rio T."/>
            <person name="Hammon N."/>
            <person name="Israni S."/>
            <person name="Dalin E."/>
            <person name="Tice H."/>
            <person name="Pitluck S."/>
            <person name="Chain P."/>
            <person name="Malfatti S."/>
            <person name="Shin M."/>
            <person name="Vergez L."/>
            <person name="Schmutz J."/>
            <person name="Larimer F."/>
            <person name="Land M."/>
            <person name="Hauser L."/>
            <person name="Kyrpides N."/>
            <person name="Ivanova N."/>
            <person name="Tomasz A."/>
            <person name="Richardson P."/>
        </authorList>
    </citation>
    <scope>NUCLEOTIDE SEQUENCE [LARGE SCALE GENOMIC DNA]</scope>
    <source>
        <strain>JH1</strain>
    </source>
</reference>
<name>EX7L_STAA2</name>
<comment type="function">
    <text evidence="1">Bidirectionally degrades single-stranded DNA into large acid-insoluble oligonucleotides, which are then degraded further into small acid-soluble oligonucleotides.</text>
</comment>
<comment type="catalytic activity">
    <reaction evidence="1">
        <text>Exonucleolytic cleavage in either 5'- to 3'- or 3'- to 5'-direction to yield nucleoside 5'-phosphates.</text>
        <dbReference type="EC" id="3.1.11.6"/>
    </reaction>
</comment>
<comment type="subunit">
    <text evidence="1">Heterooligomer composed of large and small subunits.</text>
</comment>
<comment type="subcellular location">
    <subcellularLocation>
        <location evidence="1">Cytoplasm</location>
    </subcellularLocation>
</comment>
<comment type="similarity">
    <text evidence="1">Belongs to the XseA family.</text>
</comment>
<proteinExistence type="inferred from homology"/>
<keyword id="KW-0963">Cytoplasm</keyword>
<keyword id="KW-0269">Exonuclease</keyword>
<keyword id="KW-0378">Hydrolase</keyword>
<keyword id="KW-0540">Nuclease</keyword>